<organism>
    <name type="scientific">Verminephrobacter eiseniae (strain EF01-2)</name>
    <dbReference type="NCBI Taxonomy" id="391735"/>
    <lineage>
        <taxon>Bacteria</taxon>
        <taxon>Pseudomonadati</taxon>
        <taxon>Pseudomonadota</taxon>
        <taxon>Betaproteobacteria</taxon>
        <taxon>Burkholderiales</taxon>
        <taxon>Comamonadaceae</taxon>
        <taxon>Verminephrobacter</taxon>
    </lineage>
</organism>
<accession>A1WNY2</accession>
<feature type="chain" id="PRO_1000045154" description="Aspartate/glutamate leucyltransferase">
    <location>
        <begin position="1"/>
        <end position="251"/>
    </location>
</feature>
<protein>
    <recommendedName>
        <fullName evidence="1">Aspartate/glutamate leucyltransferase</fullName>
        <ecNumber evidence="1">2.3.2.29</ecNumber>
    </recommendedName>
</protein>
<gene>
    <name evidence="1" type="primary">bpt</name>
    <name type="ordered locus">Veis_3623</name>
</gene>
<sequence>MTQLNDLPLQSLQFYATAPYPCSYLPQRQARSQVATPGHLIQSDIYSDLVTKGFRRSGMFTYRPYCDGCQACTPLRIVVDGFRPDRSQKRAVARHGKLQTRVLRLCFVPEHYQLYLRYQNGRHAGGGMDHDSIDQYTQFLLQSRVNSRLVEFREVDDTGATGGPGVLKMVSLLDLLDDGLSAVYTFYEPEPRCSYGTYNVLWQIAQARALSLPHVYLGYWIAVSPKMNYKAGFHPHEILTDGRWHRVDMPL</sequence>
<dbReference type="EC" id="2.3.2.29" evidence="1"/>
<dbReference type="EMBL" id="CP000542">
    <property type="protein sequence ID" value="ABM59339.1"/>
    <property type="molecule type" value="Genomic_DNA"/>
</dbReference>
<dbReference type="RefSeq" id="WP_011811330.1">
    <property type="nucleotide sequence ID" value="NC_008786.1"/>
</dbReference>
<dbReference type="SMR" id="A1WNY2"/>
<dbReference type="STRING" id="391735.Veis_3623"/>
<dbReference type="GeneID" id="76462022"/>
<dbReference type="KEGG" id="vei:Veis_3623"/>
<dbReference type="eggNOG" id="COG2935">
    <property type="taxonomic scope" value="Bacteria"/>
</dbReference>
<dbReference type="HOGENOM" id="CLU_077607_0_0_4"/>
<dbReference type="OrthoDB" id="9782022at2"/>
<dbReference type="Proteomes" id="UP000000374">
    <property type="component" value="Chromosome"/>
</dbReference>
<dbReference type="GO" id="GO:0005737">
    <property type="term" value="C:cytoplasm"/>
    <property type="evidence" value="ECO:0007669"/>
    <property type="project" value="UniProtKB-SubCell"/>
</dbReference>
<dbReference type="GO" id="GO:0004057">
    <property type="term" value="F:arginyl-tRNA--protein transferase activity"/>
    <property type="evidence" value="ECO:0007669"/>
    <property type="project" value="InterPro"/>
</dbReference>
<dbReference type="GO" id="GO:0008914">
    <property type="term" value="F:leucyl-tRNA--protein transferase activity"/>
    <property type="evidence" value="ECO:0007669"/>
    <property type="project" value="UniProtKB-UniRule"/>
</dbReference>
<dbReference type="GO" id="GO:0071596">
    <property type="term" value="P:ubiquitin-dependent protein catabolic process via the N-end rule pathway"/>
    <property type="evidence" value="ECO:0007669"/>
    <property type="project" value="InterPro"/>
</dbReference>
<dbReference type="HAMAP" id="MF_00689">
    <property type="entry name" value="Bpt"/>
    <property type="match status" value="1"/>
</dbReference>
<dbReference type="InterPro" id="IPR016181">
    <property type="entry name" value="Acyl_CoA_acyltransferase"/>
</dbReference>
<dbReference type="InterPro" id="IPR017138">
    <property type="entry name" value="Asp_Glu_LeuTrfase"/>
</dbReference>
<dbReference type="InterPro" id="IPR030700">
    <property type="entry name" value="N-end_Aminoacyl_Trfase"/>
</dbReference>
<dbReference type="InterPro" id="IPR007472">
    <property type="entry name" value="N-end_Aminoacyl_Trfase_C"/>
</dbReference>
<dbReference type="InterPro" id="IPR007471">
    <property type="entry name" value="N-end_Aminoacyl_Trfase_N"/>
</dbReference>
<dbReference type="NCBIfam" id="NF002341">
    <property type="entry name" value="PRK01305.1-1"/>
    <property type="match status" value="1"/>
</dbReference>
<dbReference type="NCBIfam" id="NF002342">
    <property type="entry name" value="PRK01305.1-3"/>
    <property type="match status" value="1"/>
</dbReference>
<dbReference type="NCBIfam" id="NF002346">
    <property type="entry name" value="PRK01305.2-3"/>
    <property type="match status" value="1"/>
</dbReference>
<dbReference type="PANTHER" id="PTHR21367">
    <property type="entry name" value="ARGININE-TRNA-PROTEIN TRANSFERASE 1"/>
    <property type="match status" value="1"/>
</dbReference>
<dbReference type="PANTHER" id="PTHR21367:SF1">
    <property type="entry name" value="ARGINYL-TRNA--PROTEIN TRANSFERASE 1"/>
    <property type="match status" value="1"/>
</dbReference>
<dbReference type="Pfam" id="PF04377">
    <property type="entry name" value="ATE_C"/>
    <property type="match status" value="1"/>
</dbReference>
<dbReference type="Pfam" id="PF04376">
    <property type="entry name" value="ATE_N"/>
    <property type="match status" value="1"/>
</dbReference>
<dbReference type="PIRSF" id="PIRSF037208">
    <property type="entry name" value="ATE_pro_prd"/>
    <property type="match status" value="1"/>
</dbReference>
<dbReference type="SUPFAM" id="SSF55729">
    <property type="entry name" value="Acyl-CoA N-acyltransferases (Nat)"/>
    <property type="match status" value="1"/>
</dbReference>
<proteinExistence type="inferred from homology"/>
<reference key="1">
    <citation type="submission" date="2006-12" db="EMBL/GenBank/DDBJ databases">
        <title>Complete sequence of chromosome 1 of Verminephrobacter eiseniae EF01-2.</title>
        <authorList>
            <person name="Copeland A."/>
            <person name="Lucas S."/>
            <person name="Lapidus A."/>
            <person name="Barry K."/>
            <person name="Detter J.C."/>
            <person name="Glavina del Rio T."/>
            <person name="Dalin E."/>
            <person name="Tice H."/>
            <person name="Pitluck S."/>
            <person name="Chertkov O."/>
            <person name="Brettin T."/>
            <person name="Bruce D."/>
            <person name="Han C."/>
            <person name="Tapia R."/>
            <person name="Gilna P."/>
            <person name="Schmutz J."/>
            <person name="Larimer F."/>
            <person name="Land M."/>
            <person name="Hauser L."/>
            <person name="Kyrpides N."/>
            <person name="Kim E."/>
            <person name="Stahl D."/>
            <person name="Richardson P."/>
        </authorList>
    </citation>
    <scope>NUCLEOTIDE SEQUENCE [LARGE SCALE GENOMIC DNA]</scope>
    <source>
        <strain>EF01-2</strain>
    </source>
</reference>
<comment type="function">
    <text evidence="1">Functions in the N-end rule pathway of protein degradation where it conjugates Leu from its aminoacyl-tRNA to the N-termini of proteins containing an N-terminal aspartate or glutamate.</text>
</comment>
<comment type="catalytic activity">
    <reaction evidence="1">
        <text>N-terminal L-glutamyl-[protein] + L-leucyl-tRNA(Leu) = N-terminal L-leucyl-L-glutamyl-[protein] + tRNA(Leu) + H(+)</text>
        <dbReference type="Rhea" id="RHEA:50412"/>
        <dbReference type="Rhea" id="RHEA-COMP:9613"/>
        <dbReference type="Rhea" id="RHEA-COMP:9622"/>
        <dbReference type="Rhea" id="RHEA-COMP:12664"/>
        <dbReference type="Rhea" id="RHEA-COMP:12668"/>
        <dbReference type="ChEBI" id="CHEBI:15378"/>
        <dbReference type="ChEBI" id="CHEBI:64721"/>
        <dbReference type="ChEBI" id="CHEBI:78442"/>
        <dbReference type="ChEBI" id="CHEBI:78494"/>
        <dbReference type="ChEBI" id="CHEBI:133041"/>
        <dbReference type="EC" id="2.3.2.29"/>
    </reaction>
</comment>
<comment type="catalytic activity">
    <reaction evidence="1">
        <text>N-terminal L-aspartyl-[protein] + L-leucyl-tRNA(Leu) = N-terminal L-leucyl-L-aspartyl-[protein] + tRNA(Leu) + H(+)</text>
        <dbReference type="Rhea" id="RHEA:50420"/>
        <dbReference type="Rhea" id="RHEA-COMP:9613"/>
        <dbReference type="Rhea" id="RHEA-COMP:9622"/>
        <dbReference type="Rhea" id="RHEA-COMP:12669"/>
        <dbReference type="Rhea" id="RHEA-COMP:12674"/>
        <dbReference type="ChEBI" id="CHEBI:15378"/>
        <dbReference type="ChEBI" id="CHEBI:64720"/>
        <dbReference type="ChEBI" id="CHEBI:78442"/>
        <dbReference type="ChEBI" id="CHEBI:78494"/>
        <dbReference type="ChEBI" id="CHEBI:133042"/>
        <dbReference type="EC" id="2.3.2.29"/>
    </reaction>
</comment>
<comment type="subcellular location">
    <subcellularLocation>
        <location evidence="1">Cytoplasm</location>
    </subcellularLocation>
</comment>
<comment type="similarity">
    <text evidence="1">Belongs to the R-transferase family. Bpt subfamily.</text>
</comment>
<evidence type="ECO:0000255" key="1">
    <source>
        <dbReference type="HAMAP-Rule" id="MF_00689"/>
    </source>
</evidence>
<name>BPT_VEREI</name>
<keyword id="KW-0012">Acyltransferase</keyword>
<keyword id="KW-0963">Cytoplasm</keyword>
<keyword id="KW-1185">Reference proteome</keyword>
<keyword id="KW-0808">Transferase</keyword>